<feature type="signal peptide" evidence="1">
    <location>
        <begin position="1"/>
        <end position="27"/>
    </location>
</feature>
<feature type="chain" id="PRO_0000013629" description="Uncharacterized protein aq_1959">
    <location>
        <begin position="28"/>
        <end position="160"/>
    </location>
</feature>
<organism>
    <name type="scientific">Aquifex aeolicus (strain VF5)</name>
    <dbReference type="NCBI Taxonomy" id="224324"/>
    <lineage>
        <taxon>Bacteria</taxon>
        <taxon>Pseudomonadati</taxon>
        <taxon>Aquificota</taxon>
        <taxon>Aquificia</taxon>
        <taxon>Aquificales</taxon>
        <taxon>Aquificaceae</taxon>
        <taxon>Aquifex</taxon>
    </lineage>
</organism>
<accession>O67771</accession>
<reference key="1">
    <citation type="journal article" date="1998" name="Nature">
        <title>The complete genome of the hyperthermophilic bacterium Aquifex aeolicus.</title>
        <authorList>
            <person name="Deckert G."/>
            <person name="Warren P.V."/>
            <person name="Gaasterland T."/>
            <person name="Young W.G."/>
            <person name="Lenox A.L."/>
            <person name="Graham D.E."/>
            <person name="Overbeek R."/>
            <person name="Snead M.A."/>
            <person name="Keller M."/>
            <person name="Aujay M."/>
            <person name="Huber R."/>
            <person name="Feldman R.A."/>
            <person name="Short J.M."/>
            <person name="Olsen G.J."/>
            <person name="Swanson R.V."/>
        </authorList>
    </citation>
    <scope>NUCLEOTIDE SEQUENCE [LARGE SCALE GENOMIC DNA]</scope>
    <source>
        <strain>VF5</strain>
    </source>
</reference>
<keyword id="KW-1185">Reference proteome</keyword>
<keyword id="KW-0732">Signal</keyword>
<gene>
    <name type="ordered locus">aq_1959</name>
</gene>
<name>Y1959_AQUAE</name>
<proteinExistence type="inferred from homology"/>
<dbReference type="EMBL" id="AE000657">
    <property type="protein sequence ID" value="AAC07742.1"/>
    <property type="molecule type" value="Genomic_DNA"/>
</dbReference>
<dbReference type="PIR" id="G70467">
    <property type="entry name" value="G70467"/>
</dbReference>
<dbReference type="RefSeq" id="NP_214340.1">
    <property type="nucleotide sequence ID" value="NC_000918.1"/>
</dbReference>
<dbReference type="SMR" id="O67771"/>
<dbReference type="STRING" id="224324.aq_1959"/>
<dbReference type="EnsemblBacteria" id="AAC07742">
    <property type="protein sequence ID" value="AAC07742"/>
    <property type="gene ID" value="aq_1959"/>
</dbReference>
<dbReference type="KEGG" id="aae:aq_1959"/>
<dbReference type="HOGENOM" id="CLU_1648630_0_0_0"/>
<dbReference type="InParanoid" id="O67771"/>
<dbReference type="Proteomes" id="UP000000798">
    <property type="component" value="Chromosome"/>
</dbReference>
<sequence>MVIGRKAGIIIYVMHALLLLLLSFTFALEPLSEWWSKAKEVCLYGKYKNYDGTLRDIKPFCCKVERVEVEPIKGLLKGKFGLKESLKVIASCNGAFYGVMSYDGTILAVGGKKGIVKETPSGVMEVEDEKTIHFVVCRSGASLEGCYGEVFAEGYIIKKK</sequence>
<protein>
    <recommendedName>
        <fullName>Uncharacterized protein aq_1959</fullName>
    </recommendedName>
</protein>
<evidence type="ECO:0000255" key="1"/>